<organism>
    <name type="scientific">Synechococcus sp. (strain JA-2-3B'a(2-13))</name>
    <name type="common">Cyanobacteria bacterium Yellowstone B-Prime</name>
    <dbReference type="NCBI Taxonomy" id="321332"/>
    <lineage>
        <taxon>Bacteria</taxon>
        <taxon>Bacillati</taxon>
        <taxon>Cyanobacteriota</taxon>
        <taxon>Cyanophyceae</taxon>
        <taxon>Synechococcales</taxon>
        <taxon>Synechococcaceae</taxon>
        <taxon>Synechococcus</taxon>
    </lineage>
</organism>
<sequence>MATARRVARVAELIKREVSQILLSEIKDDRVGAGMVSIVDVEVSNDLQNARIFVSIYGDETAQHQAMEGLAAATPFVRREIGQRLSLRRVPTVVFLQDRSLERGSRVLALLNQLRPTFEAKAQTGVEEPLENTAEGEENPSGGE</sequence>
<accession>Q2JPS6</accession>
<keyword id="KW-0963">Cytoplasm</keyword>
<keyword id="KW-1185">Reference proteome</keyword>
<keyword id="KW-0690">Ribosome biogenesis</keyword>
<proteinExistence type="inferred from homology"/>
<evidence type="ECO:0000255" key="1">
    <source>
        <dbReference type="HAMAP-Rule" id="MF_00003"/>
    </source>
</evidence>
<evidence type="ECO:0000256" key="2">
    <source>
        <dbReference type="SAM" id="MobiDB-lite"/>
    </source>
</evidence>
<feature type="chain" id="PRO_1000000232" description="Ribosome-binding factor A">
    <location>
        <begin position="1"/>
        <end position="144"/>
    </location>
</feature>
<feature type="region of interest" description="Disordered" evidence="2">
    <location>
        <begin position="121"/>
        <end position="144"/>
    </location>
</feature>
<feature type="compositionally biased region" description="Acidic residues" evidence="2">
    <location>
        <begin position="128"/>
        <end position="138"/>
    </location>
</feature>
<protein>
    <recommendedName>
        <fullName evidence="1">Ribosome-binding factor A</fullName>
    </recommendedName>
</protein>
<reference key="1">
    <citation type="journal article" date="2007" name="ISME J.">
        <title>Population level functional diversity in a microbial community revealed by comparative genomic and metagenomic analyses.</title>
        <authorList>
            <person name="Bhaya D."/>
            <person name="Grossman A.R."/>
            <person name="Steunou A.-S."/>
            <person name="Khuri N."/>
            <person name="Cohan F.M."/>
            <person name="Hamamura N."/>
            <person name="Melendrez M.C."/>
            <person name="Bateson M.M."/>
            <person name="Ward D.M."/>
            <person name="Heidelberg J.F."/>
        </authorList>
    </citation>
    <scope>NUCLEOTIDE SEQUENCE [LARGE SCALE GENOMIC DNA]</scope>
    <source>
        <strain>JA-2-3B'a(2-13)</strain>
    </source>
</reference>
<comment type="function">
    <text evidence="1">One of several proteins that assist in the late maturation steps of the functional core of the 30S ribosomal subunit. Associates with free 30S ribosomal subunits (but not with 30S subunits that are part of 70S ribosomes or polysomes). Required for efficient processing of 16S rRNA. May interact with the 5'-terminal helix region of 16S rRNA.</text>
</comment>
<comment type="subunit">
    <text evidence="1">Monomer. Binds 30S ribosomal subunits, but not 50S ribosomal subunits or 70S ribosomes.</text>
</comment>
<comment type="subcellular location">
    <subcellularLocation>
        <location evidence="1">Cytoplasm</location>
    </subcellularLocation>
</comment>
<comment type="similarity">
    <text evidence="1">Belongs to the RbfA family.</text>
</comment>
<gene>
    <name evidence="1" type="primary">rbfA</name>
    <name type="ordered locus">CYB_0200</name>
</gene>
<name>RBFA_SYNJB</name>
<dbReference type="EMBL" id="CP000240">
    <property type="protein sequence ID" value="ABD01200.1"/>
    <property type="molecule type" value="Genomic_DNA"/>
</dbReference>
<dbReference type="RefSeq" id="WP_011431871.1">
    <property type="nucleotide sequence ID" value="NC_007776.1"/>
</dbReference>
<dbReference type="SMR" id="Q2JPS6"/>
<dbReference type="STRING" id="321332.CYB_0200"/>
<dbReference type="KEGG" id="cyb:CYB_0200"/>
<dbReference type="eggNOG" id="COG0858">
    <property type="taxonomic scope" value="Bacteria"/>
</dbReference>
<dbReference type="HOGENOM" id="CLU_089475_2_1_3"/>
<dbReference type="OrthoDB" id="307788at2"/>
<dbReference type="Proteomes" id="UP000001938">
    <property type="component" value="Chromosome"/>
</dbReference>
<dbReference type="GO" id="GO:0005829">
    <property type="term" value="C:cytosol"/>
    <property type="evidence" value="ECO:0007669"/>
    <property type="project" value="TreeGrafter"/>
</dbReference>
<dbReference type="GO" id="GO:0043024">
    <property type="term" value="F:ribosomal small subunit binding"/>
    <property type="evidence" value="ECO:0007669"/>
    <property type="project" value="TreeGrafter"/>
</dbReference>
<dbReference type="GO" id="GO:0030490">
    <property type="term" value="P:maturation of SSU-rRNA"/>
    <property type="evidence" value="ECO:0007669"/>
    <property type="project" value="UniProtKB-UniRule"/>
</dbReference>
<dbReference type="Gene3D" id="3.30.300.20">
    <property type="match status" value="1"/>
</dbReference>
<dbReference type="HAMAP" id="MF_00003">
    <property type="entry name" value="RbfA"/>
    <property type="match status" value="1"/>
</dbReference>
<dbReference type="InterPro" id="IPR015946">
    <property type="entry name" value="KH_dom-like_a/b"/>
</dbReference>
<dbReference type="InterPro" id="IPR000238">
    <property type="entry name" value="RbfA"/>
</dbReference>
<dbReference type="InterPro" id="IPR023799">
    <property type="entry name" value="RbfA_dom_sf"/>
</dbReference>
<dbReference type="InterPro" id="IPR020053">
    <property type="entry name" value="Ribosome-bd_factorA_CS"/>
</dbReference>
<dbReference type="NCBIfam" id="TIGR00082">
    <property type="entry name" value="rbfA"/>
    <property type="match status" value="1"/>
</dbReference>
<dbReference type="PANTHER" id="PTHR33515">
    <property type="entry name" value="RIBOSOME-BINDING FACTOR A, CHLOROPLASTIC-RELATED"/>
    <property type="match status" value="1"/>
</dbReference>
<dbReference type="PANTHER" id="PTHR33515:SF1">
    <property type="entry name" value="RIBOSOME-BINDING FACTOR A, CHLOROPLASTIC-RELATED"/>
    <property type="match status" value="1"/>
</dbReference>
<dbReference type="Pfam" id="PF02033">
    <property type="entry name" value="RBFA"/>
    <property type="match status" value="1"/>
</dbReference>
<dbReference type="SUPFAM" id="SSF89919">
    <property type="entry name" value="Ribosome-binding factor A, RbfA"/>
    <property type="match status" value="1"/>
</dbReference>
<dbReference type="PROSITE" id="PS01319">
    <property type="entry name" value="RBFA"/>
    <property type="match status" value="1"/>
</dbReference>